<evidence type="ECO:0000250" key="1">
    <source>
        <dbReference type="UniProtKB" id="P02655"/>
    </source>
</evidence>
<evidence type="ECO:0000269" key="2">
    <source>
    </source>
</evidence>
<evidence type="ECO:0000305" key="3"/>
<feature type="signal peptide" evidence="2">
    <location>
        <begin position="1"/>
        <end position="22"/>
    </location>
</feature>
<feature type="chain" id="PRO_0000002020" description="Proapolipoprotein C-II" evidence="2">
    <location>
        <begin position="23"/>
        <end position="101"/>
    </location>
</feature>
<feature type="chain" id="PRO_0000002021" description="Apolipoprotein C-II">
    <location>
        <begin position="29"/>
        <end position="101"/>
    </location>
</feature>
<feature type="region of interest" description="Lipid binding" evidence="1">
    <location>
        <begin position="66"/>
        <end position="74"/>
    </location>
</feature>
<feature type="region of interest" description="Lipoprotein lipase cofactor" evidence="1">
    <location>
        <begin position="78"/>
        <end position="101"/>
    </location>
</feature>
<gene>
    <name type="primary">APOC2</name>
</gene>
<accession>P19034</accession>
<accession>A6H771</accession>
<accession>Q71VH7</accession>
<proteinExistence type="evidence at protein level"/>
<organism>
    <name type="scientific">Bos taurus</name>
    <name type="common">Bovine</name>
    <dbReference type="NCBI Taxonomy" id="9913"/>
    <lineage>
        <taxon>Eukaryota</taxon>
        <taxon>Metazoa</taxon>
        <taxon>Chordata</taxon>
        <taxon>Craniata</taxon>
        <taxon>Vertebrata</taxon>
        <taxon>Euteleostomi</taxon>
        <taxon>Mammalia</taxon>
        <taxon>Eutheria</taxon>
        <taxon>Laurasiatheria</taxon>
        <taxon>Artiodactyla</taxon>
        <taxon>Ruminantia</taxon>
        <taxon>Pecora</taxon>
        <taxon>Bovidae</taxon>
        <taxon>Bovinae</taxon>
        <taxon>Bos</taxon>
    </lineage>
</organism>
<sequence>MGTRYFLVGFLILLVLGFEVQGAHVPQQDEASSPALLTQVQESLLGYWDTAKAAAQKLYKKTYLPAVDEKIRDIYSKSTAAVTTYAGIITDQVFSVLSGKD</sequence>
<keyword id="KW-0162">Chylomicron</keyword>
<keyword id="KW-0903">Direct protein sequencing</keyword>
<keyword id="KW-0325">Glycoprotein</keyword>
<keyword id="KW-0345">HDL</keyword>
<keyword id="KW-0427">LDL</keyword>
<keyword id="KW-0442">Lipid degradation</keyword>
<keyword id="KW-0443">Lipid metabolism</keyword>
<keyword id="KW-0445">Lipid transport</keyword>
<keyword id="KW-1185">Reference proteome</keyword>
<keyword id="KW-0964">Secreted</keyword>
<keyword id="KW-0730">Sialic acid</keyword>
<keyword id="KW-0732">Signal</keyword>
<keyword id="KW-0813">Transport</keyword>
<keyword id="KW-0850">VLDL</keyword>
<name>APOC2_BOVIN</name>
<comment type="function">
    <text evidence="2">Component of chylomicrons, very low-density lipoproteins (VLDL), low-density lipoproteins (LDL), and high-density lipoproteins (HDL) in plasma. Plays an important role in lipoprotein metabolism as an activator of lipoprotein lipase. Both proapolipoprotein C-II and apolipoprotein C-II can activate lipoprotein lipase.</text>
</comment>
<comment type="subcellular location">
    <subcellularLocation>
        <location evidence="1">Secreted</location>
    </subcellularLocation>
</comment>
<comment type="PTM">
    <text evidence="1">Proapolipoprotein C-II is synthesized as a sialic acid containing glycoprotein which is subsequently desialylated prior to its proteolytic processing.</text>
</comment>
<comment type="PTM">
    <text evidence="2">Proapolipoprotein C-II undergoes proteolytic cleavage of its N-terminal hexapeptide to generate apolipoprotein C-II. In bovine, proapolipoprotein C-II was found to be the minor form whereas apolipoprotein C-II was found to be the major form in plasma.</text>
</comment>
<comment type="similarity">
    <text evidence="3">Belongs to the apolipoprotein C2 family.</text>
</comment>
<protein>
    <recommendedName>
        <fullName>Apolipoprotein C-II</fullName>
        <shortName>Apo-CII</shortName>
        <shortName>ApoC-II</shortName>
    </recommendedName>
    <alternativeName>
        <fullName>Apolipoprotein C2</fullName>
    </alternativeName>
    <component>
        <recommendedName>
            <fullName>Proapolipoprotein C-II</fullName>
            <shortName>ProapoC-II</shortName>
        </recommendedName>
    </component>
</protein>
<reference key="1">
    <citation type="submission" date="2007-06" db="EMBL/GenBank/DDBJ databases">
        <authorList>
            <consortium name="NIH - Mammalian Gene Collection (MGC) project"/>
        </authorList>
    </citation>
    <scope>NUCLEOTIDE SEQUENCE [LARGE SCALE MRNA]</scope>
    <source>
        <strain>Hereford</strain>
        <tissue>Fetal liver</tissue>
    </source>
</reference>
<reference key="2">
    <citation type="journal article" date="1990" name="Eur. J. Biochem.">
        <title>Primary structure of the bovine analogues to human apolipoproteins CII and CIII. Studies on isoforms and evidence for proteolytic processing.</title>
        <authorList>
            <person name="Bengtsson-Olivecrona G."/>
            <person name="Sletten K."/>
        </authorList>
    </citation>
    <scope>PROTEIN SEQUENCE OF 23-101</scope>
    <scope>PROTEOLYTIC PROCESSING</scope>
    <scope>FUNCTION</scope>
</reference>
<reference key="3">
    <citation type="journal article" date="2000" name="Gene">
        <title>Evolutionary conservation of the apolipoprotein E-C1-C2 gene cluster on bovine chromosome 18q24.</title>
        <authorList>
            <person name="Brzozowska A."/>
            <person name="Sundvold H."/>
            <person name="Lien S."/>
            <person name="Rogne S."/>
        </authorList>
    </citation>
    <scope>NUCLEOTIDE SEQUENCE [GENOMIC DNA] OF 65-83</scope>
</reference>
<dbReference type="EMBL" id="BC146135">
    <property type="protein sequence ID" value="AAI46136.1"/>
    <property type="molecule type" value="mRNA"/>
</dbReference>
<dbReference type="EMBL" id="AF007114">
    <property type="protein sequence ID" value="AAB63893.1"/>
    <property type="molecule type" value="Genomic_DNA"/>
</dbReference>
<dbReference type="PIR" id="S13187">
    <property type="entry name" value="S13187"/>
</dbReference>
<dbReference type="RefSeq" id="NP_001095850.1">
    <property type="nucleotide sequence ID" value="NM_001102380.2"/>
</dbReference>
<dbReference type="RefSeq" id="XP_015313666.1">
    <property type="nucleotide sequence ID" value="XM_015458180.1"/>
</dbReference>
<dbReference type="SMR" id="P19034"/>
<dbReference type="FunCoup" id="P19034">
    <property type="interactions" value="15"/>
</dbReference>
<dbReference type="STRING" id="9913.ENSBTAP00000072164"/>
<dbReference type="PaxDb" id="9913-ENSBTAP00000027393"/>
<dbReference type="GeneID" id="618039"/>
<dbReference type="KEGG" id="bta:618039"/>
<dbReference type="CTD" id="344"/>
<dbReference type="VEuPathDB" id="HostDB:ENSBTAG00000020558"/>
<dbReference type="eggNOG" id="ENOG502SEJB">
    <property type="taxonomic scope" value="Eukaryota"/>
</dbReference>
<dbReference type="HOGENOM" id="CLU_180154_0_0_1"/>
<dbReference type="InParanoid" id="P19034"/>
<dbReference type="OMA" id="GTHEPQE"/>
<dbReference type="OrthoDB" id="9881800at2759"/>
<dbReference type="TreeFam" id="TF338218"/>
<dbReference type="Reactome" id="R-BTA-8963888">
    <property type="pathway name" value="Chylomicron assembly"/>
</dbReference>
<dbReference type="Reactome" id="R-BTA-8963901">
    <property type="pathway name" value="Chylomicron remodeling"/>
</dbReference>
<dbReference type="Reactome" id="R-BTA-8964058">
    <property type="pathway name" value="HDL remodeling"/>
</dbReference>
<dbReference type="Reactome" id="R-BTA-975634">
    <property type="pathway name" value="Retinoid metabolism and transport"/>
</dbReference>
<dbReference type="Proteomes" id="UP000009136">
    <property type="component" value="Chromosome 18"/>
</dbReference>
<dbReference type="Bgee" id="ENSBTAG00000020558">
    <property type="expression patterns" value="Expressed in liver and 45 other cell types or tissues"/>
</dbReference>
<dbReference type="GO" id="GO:0042627">
    <property type="term" value="C:chylomicron"/>
    <property type="evidence" value="ECO:0000318"/>
    <property type="project" value="GO_Central"/>
</dbReference>
<dbReference type="GO" id="GO:0034363">
    <property type="term" value="C:intermediate-density lipoprotein particle"/>
    <property type="evidence" value="ECO:0000318"/>
    <property type="project" value="GO_Central"/>
</dbReference>
<dbReference type="GO" id="GO:0034362">
    <property type="term" value="C:low-density lipoprotein particle"/>
    <property type="evidence" value="ECO:0000318"/>
    <property type="project" value="GO_Central"/>
</dbReference>
<dbReference type="GO" id="GO:0034366">
    <property type="term" value="C:spherical high-density lipoprotein particle"/>
    <property type="evidence" value="ECO:0000318"/>
    <property type="project" value="GO_Central"/>
</dbReference>
<dbReference type="GO" id="GO:0034361">
    <property type="term" value="C:very-low-density lipoprotein particle"/>
    <property type="evidence" value="ECO:0000318"/>
    <property type="project" value="GO_Central"/>
</dbReference>
<dbReference type="GO" id="GO:0060230">
    <property type="term" value="F:lipoprotein lipase activator activity"/>
    <property type="evidence" value="ECO:0000303"/>
    <property type="project" value="BHF-UCL"/>
</dbReference>
<dbReference type="GO" id="GO:0016004">
    <property type="term" value="F:phospholipase activator activity"/>
    <property type="evidence" value="ECO:0000318"/>
    <property type="project" value="GO_Central"/>
</dbReference>
<dbReference type="GO" id="GO:0043274">
    <property type="term" value="F:phospholipase binding"/>
    <property type="evidence" value="ECO:0000318"/>
    <property type="project" value="GO_Central"/>
</dbReference>
<dbReference type="GO" id="GO:0034382">
    <property type="term" value="P:chylomicron remnant clearance"/>
    <property type="evidence" value="ECO:0000318"/>
    <property type="project" value="GO_Central"/>
</dbReference>
<dbReference type="GO" id="GO:0034384">
    <property type="term" value="P:high-density lipoprotein particle clearance"/>
    <property type="evidence" value="ECO:0000318"/>
    <property type="project" value="GO_Central"/>
</dbReference>
<dbReference type="GO" id="GO:0016042">
    <property type="term" value="P:lipid catabolic process"/>
    <property type="evidence" value="ECO:0007669"/>
    <property type="project" value="UniProtKB-KW"/>
</dbReference>
<dbReference type="GO" id="GO:0006869">
    <property type="term" value="P:lipid transport"/>
    <property type="evidence" value="ECO:0007669"/>
    <property type="project" value="UniProtKB-KW"/>
</dbReference>
<dbReference type="GO" id="GO:0042159">
    <property type="term" value="P:lipoprotein catabolic process"/>
    <property type="evidence" value="ECO:0000318"/>
    <property type="project" value="GO_Central"/>
</dbReference>
<dbReference type="GO" id="GO:0045723">
    <property type="term" value="P:positive regulation of fatty acid biosynthetic process"/>
    <property type="evidence" value="ECO:0000303"/>
    <property type="project" value="BHF-UCL"/>
</dbReference>
<dbReference type="GO" id="GO:0010898">
    <property type="term" value="P:positive regulation of triglyceride catabolic process"/>
    <property type="evidence" value="ECO:0000303"/>
    <property type="project" value="BHF-UCL"/>
</dbReference>
<dbReference type="GO" id="GO:0010902">
    <property type="term" value="P:positive regulation of very-low-density lipoprotein particle remodeling"/>
    <property type="evidence" value="ECO:0000303"/>
    <property type="project" value="BHF-UCL"/>
</dbReference>
<dbReference type="FunFam" id="1.10.1440.10:FF:000001">
    <property type="entry name" value="Apolipoprotein C-II"/>
    <property type="match status" value="1"/>
</dbReference>
<dbReference type="Gene3D" id="1.10.1440.10">
    <property type="entry name" value="Apolipoprotein C-II"/>
    <property type="match status" value="1"/>
</dbReference>
<dbReference type="InterPro" id="IPR008019">
    <property type="entry name" value="Apo-CII"/>
</dbReference>
<dbReference type="InterPro" id="IPR023121">
    <property type="entry name" value="ApoC-II_dom_sf"/>
</dbReference>
<dbReference type="PANTHER" id="PTHR16566">
    <property type="entry name" value="APOLIPOPROTEIN C-II"/>
    <property type="match status" value="1"/>
</dbReference>
<dbReference type="PANTHER" id="PTHR16566:SF0">
    <property type="entry name" value="APOLIPOPROTEIN C-II"/>
    <property type="match status" value="1"/>
</dbReference>
<dbReference type="Pfam" id="PF05355">
    <property type="entry name" value="Apo-CII"/>
    <property type="match status" value="1"/>
</dbReference>